<name>UREE_PROMH</name>
<comment type="function">
    <text evidence="2 3">Involved in urease metallocenter assembly. Binds nickel. Probably functions as a nickel donor during metallocenter assembly. It is not essential for urease activity.</text>
</comment>
<comment type="subunit">
    <text evidence="1">Homodimer.</text>
</comment>
<comment type="subcellular location">
    <subcellularLocation>
        <location evidence="2">Cytoplasm</location>
    </subcellularLocation>
</comment>
<comment type="similarity">
    <text evidence="2">Belongs to the UreE family.</text>
</comment>
<keyword id="KW-0143">Chaperone</keyword>
<keyword id="KW-0963">Cytoplasm</keyword>
<keyword id="KW-0533">Nickel</keyword>
<keyword id="KW-0996">Nickel insertion</keyword>
<keyword id="KW-1185">Reference proteome</keyword>
<keyword id="KW-0843">Virulence</keyword>
<accession>P17090</accession>
<accession>B4EXN6</accession>
<gene>
    <name evidence="2" type="primary">ureE</name>
    <name type="ordered locus">PMI3686</name>
</gene>
<evidence type="ECO:0000250" key="1"/>
<evidence type="ECO:0000255" key="2">
    <source>
        <dbReference type="HAMAP-Rule" id="MF_00822"/>
    </source>
</evidence>
<evidence type="ECO:0000269" key="3">
    <source>
    </source>
</evidence>
<proteinExistence type="inferred from homology"/>
<protein>
    <recommendedName>
        <fullName evidence="2">Urease accessory protein UreE</fullName>
    </recommendedName>
</protein>
<organism>
    <name type="scientific">Proteus mirabilis (strain HI4320)</name>
    <dbReference type="NCBI Taxonomy" id="529507"/>
    <lineage>
        <taxon>Bacteria</taxon>
        <taxon>Pseudomonadati</taxon>
        <taxon>Pseudomonadota</taxon>
        <taxon>Gammaproteobacteria</taxon>
        <taxon>Enterobacterales</taxon>
        <taxon>Morganellaceae</taxon>
        <taxon>Proteus</taxon>
    </lineage>
</organism>
<dbReference type="EMBL" id="M31834">
    <property type="protein sequence ID" value="AAA25670.1"/>
    <property type="molecule type" value="Genomic_DNA"/>
</dbReference>
<dbReference type="EMBL" id="AM942759">
    <property type="protein sequence ID" value="CAR47186.1"/>
    <property type="molecule type" value="Genomic_DNA"/>
</dbReference>
<dbReference type="PIR" id="E43719">
    <property type="entry name" value="E43719"/>
</dbReference>
<dbReference type="RefSeq" id="WP_004245261.1">
    <property type="nucleotide sequence ID" value="NC_010554.1"/>
</dbReference>
<dbReference type="SMR" id="P17090"/>
<dbReference type="EnsemblBacteria" id="CAR47186">
    <property type="protein sequence ID" value="CAR47186"/>
    <property type="gene ID" value="PMI3686"/>
</dbReference>
<dbReference type="GeneID" id="6800328"/>
<dbReference type="KEGG" id="pmr:PMI3686"/>
<dbReference type="eggNOG" id="COG2371">
    <property type="taxonomic scope" value="Bacteria"/>
</dbReference>
<dbReference type="HOGENOM" id="CLU_093757_2_0_6"/>
<dbReference type="Proteomes" id="UP000008319">
    <property type="component" value="Chromosome"/>
</dbReference>
<dbReference type="GO" id="GO:0005737">
    <property type="term" value="C:cytoplasm"/>
    <property type="evidence" value="ECO:0007669"/>
    <property type="project" value="UniProtKB-SubCell"/>
</dbReference>
<dbReference type="GO" id="GO:0016151">
    <property type="term" value="F:nickel cation binding"/>
    <property type="evidence" value="ECO:0007669"/>
    <property type="project" value="UniProtKB-UniRule"/>
</dbReference>
<dbReference type="GO" id="GO:0051082">
    <property type="term" value="F:unfolded protein binding"/>
    <property type="evidence" value="ECO:0007669"/>
    <property type="project" value="UniProtKB-UniRule"/>
</dbReference>
<dbReference type="GO" id="GO:0006457">
    <property type="term" value="P:protein folding"/>
    <property type="evidence" value="ECO:0007669"/>
    <property type="project" value="InterPro"/>
</dbReference>
<dbReference type="GO" id="GO:0065003">
    <property type="term" value="P:protein-containing complex assembly"/>
    <property type="evidence" value="ECO:0007669"/>
    <property type="project" value="InterPro"/>
</dbReference>
<dbReference type="GO" id="GO:0019627">
    <property type="term" value="P:urea metabolic process"/>
    <property type="evidence" value="ECO:0007669"/>
    <property type="project" value="InterPro"/>
</dbReference>
<dbReference type="CDD" id="cd00571">
    <property type="entry name" value="UreE"/>
    <property type="match status" value="1"/>
</dbReference>
<dbReference type="Gene3D" id="2.60.260.20">
    <property type="entry name" value="Urease metallochaperone UreE, N-terminal domain"/>
    <property type="match status" value="1"/>
</dbReference>
<dbReference type="Gene3D" id="3.30.70.790">
    <property type="entry name" value="UreE, C-terminal domain"/>
    <property type="match status" value="1"/>
</dbReference>
<dbReference type="HAMAP" id="MF_00822">
    <property type="entry name" value="UreE"/>
    <property type="match status" value="1"/>
</dbReference>
<dbReference type="InterPro" id="IPR012406">
    <property type="entry name" value="UreE"/>
</dbReference>
<dbReference type="InterPro" id="IPR007864">
    <property type="entry name" value="UreE_C_dom"/>
</dbReference>
<dbReference type="InterPro" id="IPR004029">
    <property type="entry name" value="UreE_N"/>
</dbReference>
<dbReference type="InterPro" id="IPR036118">
    <property type="entry name" value="UreE_N_sf"/>
</dbReference>
<dbReference type="NCBIfam" id="NF009751">
    <property type="entry name" value="PRK13261.1-1"/>
    <property type="match status" value="1"/>
</dbReference>
<dbReference type="Pfam" id="PF05194">
    <property type="entry name" value="UreE_C"/>
    <property type="match status" value="1"/>
</dbReference>
<dbReference type="Pfam" id="PF02814">
    <property type="entry name" value="UreE_N"/>
    <property type="match status" value="1"/>
</dbReference>
<dbReference type="PIRSF" id="PIRSF036402">
    <property type="entry name" value="Ureas_acces_UreE"/>
    <property type="match status" value="1"/>
</dbReference>
<dbReference type="SMART" id="SM00988">
    <property type="entry name" value="UreE_N"/>
    <property type="match status" value="1"/>
</dbReference>
<dbReference type="SUPFAM" id="SSF69737">
    <property type="entry name" value="Urease metallochaperone UreE, C-terminal domain"/>
    <property type="match status" value="1"/>
</dbReference>
<dbReference type="SUPFAM" id="SSF69287">
    <property type="entry name" value="Urease metallochaperone UreE, N-terminal domain"/>
    <property type="match status" value="1"/>
</dbReference>
<feature type="chain" id="PRO_0000067637" description="Urease accessory protein UreE">
    <location>
        <begin position="1"/>
        <end position="161"/>
    </location>
</feature>
<reference key="1">
    <citation type="journal article" date="1989" name="J. Bacteriol.">
        <title>Proteus mirabilis urease: nucleotide sequence determination and comparison with jack bean urease.</title>
        <authorList>
            <person name="Jones B.D."/>
            <person name="Mobley H.L.T."/>
        </authorList>
    </citation>
    <scope>NUCLEOTIDE SEQUENCE [GENOMIC DNA]</scope>
</reference>
<reference key="2">
    <citation type="journal article" date="2008" name="J. Bacteriol.">
        <title>Complete genome sequence of uropathogenic Proteus mirabilis, a master of both adherence and motility.</title>
        <authorList>
            <person name="Pearson M.M."/>
            <person name="Sebaihia M."/>
            <person name="Churcher C."/>
            <person name="Quail M.A."/>
            <person name="Seshasayee A.S."/>
            <person name="Luscombe N.M."/>
            <person name="Abdellah Z."/>
            <person name="Arrosmith C."/>
            <person name="Atkin B."/>
            <person name="Chillingworth T."/>
            <person name="Hauser H."/>
            <person name="Jagels K."/>
            <person name="Moule S."/>
            <person name="Mungall K."/>
            <person name="Norbertczak H."/>
            <person name="Rabbinowitsch E."/>
            <person name="Walker D."/>
            <person name="Whithead S."/>
            <person name="Thomson N.R."/>
            <person name="Rather P.N."/>
            <person name="Parkhill J."/>
            <person name="Mobley H.L.T."/>
        </authorList>
    </citation>
    <scope>NUCLEOTIDE SEQUENCE [LARGE SCALE GENOMIC DNA]</scope>
    <source>
        <strain>HI4320</strain>
    </source>
</reference>
<reference key="3">
    <citation type="journal article" date="1990" name="Infect. Immun.">
        <title>Construction of a urease-negative mutant of Proteus mirabilis: analysis of virulence in a mouse model of ascending urinary tract infection.</title>
        <authorList>
            <person name="Jones B.D."/>
            <person name="Lockatell C.V."/>
            <person name="Johnson D.E."/>
            <person name="Warren J.W."/>
            <person name="Mobley H.L.T."/>
        </authorList>
    </citation>
    <scope>UREASE AS A VIRULENCE FACTOR</scope>
</reference>
<reference key="4">
    <citation type="journal article" date="1995" name="J. Bacteriol.">
        <title>Proteus mirabilis urease: operon fusion and linker insertion analysis of ure gene organization, regulation, and function.</title>
        <authorList>
            <person name="Island M.D."/>
            <person name="Mobley H.L.T."/>
        </authorList>
    </citation>
    <scope>PROBABLE OPERON STRUCTURE</scope>
    <scope>FUNCTION</scope>
</reference>
<sequence length="161" mass="17887">MKKFTQIIDQQKALELTSTEKPKLTLCLTMDERTKSRLKVALSDGQEAGLFLPRGTVLKEGDILLSEEGDVVTIEAAKEQVSTVYSDDPLLLARVCYHLGNRHVPLQIEAGWCRYFHDHVLDDMARGLGATVVVGLEKYQPEPGAYGGSSGGHHHHHDHHH</sequence>